<sequence>PRPTRPDKARRLGYKAKQGYVIYRVRVRRGGRKRPVPKGATYGKPVHHGVNQLKFARSLQSVAEERAGRHCGALRVLNSYWVGEDSTYKFFEVILIDPFHKRIRRNPDTQWITKPVHKHREMRGLTSAGRKSRGLGKGHKFHHTIGGSRRAAWRRRNTLQLHRYR</sequence>
<reference key="1">
    <citation type="journal article" date="1995" name="Biochem. Biophys. Res. Commun.">
        <title>Differential expression of the L10 ribosomal protein during heart development.</title>
        <authorList>
            <person name="Kirby M.L."/>
            <person name="Cheng G."/>
            <person name="Stadt H."/>
            <person name="Hunter G."/>
        </authorList>
    </citation>
    <scope>NUCLEOTIDE SEQUENCE [GENOMIC DNA]</scope>
</reference>
<name>RL15_CHICK</name>
<keyword id="KW-0963">Cytoplasm</keyword>
<keyword id="KW-1185">Reference proteome</keyword>
<keyword id="KW-0687">Ribonucleoprotein</keyword>
<keyword id="KW-0689">Ribosomal protein</keyword>
<organism>
    <name type="scientific">Gallus gallus</name>
    <name type="common">Chicken</name>
    <dbReference type="NCBI Taxonomy" id="9031"/>
    <lineage>
        <taxon>Eukaryota</taxon>
        <taxon>Metazoa</taxon>
        <taxon>Chordata</taxon>
        <taxon>Craniata</taxon>
        <taxon>Vertebrata</taxon>
        <taxon>Euteleostomi</taxon>
        <taxon>Archelosauria</taxon>
        <taxon>Archosauria</taxon>
        <taxon>Dinosauria</taxon>
        <taxon>Saurischia</taxon>
        <taxon>Theropoda</taxon>
        <taxon>Coelurosauria</taxon>
        <taxon>Aves</taxon>
        <taxon>Neognathae</taxon>
        <taxon>Galloanserae</taxon>
        <taxon>Galliformes</taxon>
        <taxon>Phasianidae</taxon>
        <taxon>Phasianinae</taxon>
        <taxon>Gallus</taxon>
    </lineage>
</organism>
<dbReference type="EMBL" id="U33001">
    <property type="protein sequence ID" value="AAA75449.1"/>
    <property type="molecule type" value="Genomic_DNA"/>
</dbReference>
<dbReference type="PIR" id="I50725">
    <property type="entry name" value="I50725"/>
</dbReference>
<dbReference type="SMR" id="P51417"/>
<dbReference type="FunCoup" id="P51417">
    <property type="interactions" value="501"/>
</dbReference>
<dbReference type="STRING" id="9031.ENSGALP00000049968"/>
<dbReference type="PaxDb" id="9031-ENSGALP00000036963"/>
<dbReference type="VEuPathDB" id="HostDB:geneid_428442"/>
<dbReference type="eggNOG" id="KOG1678">
    <property type="taxonomic scope" value="Eukaryota"/>
</dbReference>
<dbReference type="InParanoid" id="P51417"/>
<dbReference type="OrthoDB" id="10255148at2759"/>
<dbReference type="PhylomeDB" id="P51417"/>
<dbReference type="Proteomes" id="UP000000539">
    <property type="component" value="Unassembled WGS sequence"/>
</dbReference>
<dbReference type="GO" id="GO:0022625">
    <property type="term" value="C:cytosolic large ribosomal subunit"/>
    <property type="evidence" value="ECO:0000318"/>
    <property type="project" value="GO_Central"/>
</dbReference>
<dbReference type="GO" id="GO:0003723">
    <property type="term" value="F:RNA binding"/>
    <property type="evidence" value="ECO:0000318"/>
    <property type="project" value="GO_Central"/>
</dbReference>
<dbReference type="GO" id="GO:0003735">
    <property type="term" value="F:structural constituent of ribosome"/>
    <property type="evidence" value="ECO:0000318"/>
    <property type="project" value="GO_Central"/>
</dbReference>
<dbReference type="GO" id="GO:0002181">
    <property type="term" value="P:cytoplasmic translation"/>
    <property type="evidence" value="ECO:0000318"/>
    <property type="project" value="GO_Central"/>
</dbReference>
<dbReference type="FunFam" id="3.40.1120.10:FF:000001">
    <property type="entry name" value="Ribosomal protein L15"/>
    <property type="match status" value="1"/>
</dbReference>
<dbReference type="Gene3D" id="3.40.1120.10">
    <property type="entry name" value="Ribosomal protein l15e"/>
    <property type="match status" value="1"/>
</dbReference>
<dbReference type="InterPro" id="IPR024794">
    <property type="entry name" value="Rbsml_eL15_core_dom_sf"/>
</dbReference>
<dbReference type="InterPro" id="IPR000439">
    <property type="entry name" value="Ribosomal_eL15"/>
</dbReference>
<dbReference type="InterPro" id="IPR020925">
    <property type="entry name" value="Ribosomal_eL15_CS"/>
</dbReference>
<dbReference type="InterPro" id="IPR012678">
    <property type="entry name" value="Ribosomal_uL23/eL15/eS24_sf"/>
</dbReference>
<dbReference type="PANTHER" id="PTHR11847:SF4">
    <property type="entry name" value="LARGE RIBOSOMAL SUBUNIT PROTEIN EL15"/>
    <property type="match status" value="1"/>
</dbReference>
<dbReference type="PANTHER" id="PTHR11847">
    <property type="entry name" value="RIBOSOMAL PROTEIN L15"/>
    <property type="match status" value="1"/>
</dbReference>
<dbReference type="Pfam" id="PF00827">
    <property type="entry name" value="Ribosomal_L15e"/>
    <property type="match status" value="1"/>
</dbReference>
<dbReference type="SMART" id="SM01384">
    <property type="entry name" value="Ribosomal_L15e"/>
    <property type="match status" value="1"/>
</dbReference>
<dbReference type="SUPFAM" id="SSF54189">
    <property type="entry name" value="Ribosomal proteins S24e, L23 and L15e"/>
    <property type="match status" value="1"/>
</dbReference>
<dbReference type="PROSITE" id="PS01194">
    <property type="entry name" value="RIBOSOMAL_L15E"/>
    <property type="match status" value="1"/>
</dbReference>
<comment type="function">
    <text evidence="1">Component of the large ribosomal subunit. The ribosome is a large ribonucleoprotein complex responsible for the synthesis of proteins in the cell.</text>
</comment>
<comment type="subunit">
    <text evidence="1">Component of the large ribosomal subunit.</text>
</comment>
<comment type="subcellular location">
    <subcellularLocation>
        <location evidence="1">Cytoplasm</location>
    </subcellularLocation>
</comment>
<comment type="similarity">
    <text evidence="3">Belongs to the eukaryotic ribosomal protein eL15 family.</text>
</comment>
<evidence type="ECO:0000250" key="1">
    <source>
        <dbReference type="UniProtKB" id="P61313"/>
    </source>
</evidence>
<evidence type="ECO:0000256" key="2">
    <source>
        <dbReference type="SAM" id="MobiDB-lite"/>
    </source>
</evidence>
<evidence type="ECO:0000305" key="3"/>
<protein>
    <recommendedName>
        <fullName evidence="3">Large ribosomal subunit protein eL15</fullName>
    </recommendedName>
    <alternativeName>
        <fullName>60S ribosomal protein L15</fullName>
    </alternativeName>
    <alternativeName>
        <fullName>L10</fullName>
    </alternativeName>
</protein>
<proteinExistence type="inferred from homology"/>
<gene>
    <name type="primary">RPL15</name>
</gene>
<accession>P51417</accession>
<feature type="chain" id="PRO_0000127532" description="Large ribosomal subunit protein eL15">
    <location>
        <begin position="1" status="less than"/>
        <end position="165"/>
    </location>
</feature>
<feature type="region of interest" description="Disordered" evidence="2">
    <location>
        <begin position="126"/>
        <end position="147"/>
    </location>
</feature>
<feature type="compositionally biased region" description="Basic residues" evidence="2">
    <location>
        <begin position="130"/>
        <end position="143"/>
    </location>
</feature>
<feature type="non-terminal residue">
    <location>
        <position position="1"/>
    </location>
</feature>